<sequence>MKEMIIWPAYIDIKRTKNEGRKVPKEFAVANPKLKDIADKIKKMGLEHSIEIKKSYPMEPWEICGYIKVKLDKNTSKLQILKEISKNMK</sequence>
<feature type="chain" id="PRO_0000322228" description="Signal recognition particle 19 kDa protein">
    <location>
        <begin position="1"/>
        <end position="89"/>
    </location>
</feature>
<keyword id="KW-0963">Cytoplasm</keyword>
<keyword id="KW-0687">Ribonucleoprotein</keyword>
<keyword id="KW-0694">RNA-binding</keyword>
<keyword id="KW-0733">Signal recognition particle</keyword>
<proteinExistence type="inferred from homology"/>
<organism>
    <name type="scientific">Methanococcus maripaludis (strain C7 / ATCC BAA-1331)</name>
    <dbReference type="NCBI Taxonomy" id="426368"/>
    <lineage>
        <taxon>Archaea</taxon>
        <taxon>Methanobacteriati</taxon>
        <taxon>Methanobacteriota</taxon>
        <taxon>Methanomada group</taxon>
        <taxon>Methanococci</taxon>
        <taxon>Methanococcales</taxon>
        <taxon>Methanococcaceae</taxon>
        <taxon>Methanococcus</taxon>
    </lineage>
</organism>
<comment type="function">
    <text evidence="1">Involved in targeting and insertion of nascent membrane proteins into the cytoplasmic membrane. Binds directly to 7S RNA and mediates binding of the 54 kDa subunit of the SRP.</text>
</comment>
<comment type="subunit">
    <text evidence="1">Part of the signal recognition particle protein translocation system, which is composed of SRP and FtsY. Archaeal SRP consists of a 7S RNA molecule of 300 nucleotides and two protein subunits: SRP54 and SRP19.</text>
</comment>
<comment type="subcellular location">
    <subcellularLocation>
        <location evidence="1">Cytoplasm</location>
    </subcellularLocation>
</comment>
<comment type="similarity">
    <text evidence="1">Belongs to the SRP19 family.</text>
</comment>
<evidence type="ECO:0000255" key="1">
    <source>
        <dbReference type="HAMAP-Rule" id="MF_00305"/>
    </source>
</evidence>
<reference key="1">
    <citation type="submission" date="2007-06" db="EMBL/GenBank/DDBJ databases">
        <title>Complete sequence of Methanococcus maripaludis C7.</title>
        <authorList>
            <consortium name="US DOE Joint Genome Institute"/>
            <person name="Copeland A."/>
            <person name="Lucas S."/>
            <person name="Lapidus A."/>
            <person name="Barry K."/>
            <person name="Glavina del Rio T."/>
            <person name="Dalin E."/>
            <person name="Tice H."/>
            <person name="Pitluck S."/>
            <person name="Clum A."/>
            <person name="Schmutz J."/>
            <person name="Larimer F."/>
            <person name="Land M."/>
            <person name="Hauser L."/>
            <person name="Kyrpides N."/>
            <person name="Anderson I."/>
            <person name="Sieprawska-Lupa M."/>
            <person name="Whitman W.B."/>
            <person name="Richardson P."/>
        </authorList>
    </citation>
    <scope>NUCLEOTIDE SEQUENCE [LARGE SCALE GENOMIC DNA]</scope>
    <source>
        <strain>C7 / ATCC BAA-1331</strain>
    </source>
</reference>
<accession>A6VG52</accession>
<gene>
    <name evidence="1" type="primary">srp19</name>
    <name type="ordered locus">MmarC7_0359</name>
</gene>
<dbReference type="EMBL" id="CP000745">
    <property type="protein sequence ID" value="ABR65428.1"/>
    <property type="molecule type" value="Genomic_DNA"/>
</dbReference>
<dbReference type="SMR" id="A6VG52"/>
<dbReference type="STRING" id="426368.MmarC7_0359"/>
<dbReference type="KEGG" id="mmz:MmarC7_0359"/>
<dbReference type="eggNOG" id="arCOG01217">
    <property type="taxonomic scope" value="Archaea"/>
</dbReference>
<dbReference type="HOGENOM" id="CLU_169299_1_0_2"/>
<dbReference type="OrthoDB" id="56356at2157"/>
<dbReference type="GO" id="GO:0048500">
    <property type="term" value="C:signal recognition particle"/>
    <property type="evidence" value="ECO:0007669"/>
    <property type="project" value="UniProtKB-UniRule"/>
</dbReference>
<dbReference type="GO" id="GO:0008312">
    <property type="term" value="F:7S RNA binding"/>
    <property type="evidence" value="ECO:0007669"/>
    <property type="project" value="UniProtKB-UniRule"/>
</dbReference>
<dbReference type="GO" id="GO:0006617">
    <property type="term" value="P:SRP-dependent cotranslational protein targeting to membrane, signal sequence recognition"/>
    <property type="evidence" value="ECO:0007669"/>
    <property type="project" value="TreeGrafter"/>
</dbReference>
<dbReference type="Gene3D" id="3.30.56.30">
    <property type="entry name" value="Signal recognition particle, SRP19-like subunit"/>
    <property type="match status" value="1"/>
</dbReference>
<dbReference type="HAMAP" id="MF_00305">
    <property type="entry name" value="SRP19"/>
    <property type="match status" value="1"/>
</dbReference>
<dbReference type="InterPro" id="IPR002778">
    <property type="entry name" value="Signal_recog_particle_SRP19"/>
</dbReference>
<dbReference type="InterPro" id="IPR036521">
    <property type="entry name" value="SRP19-like_sf"/>
</dbReference>
<dbReference type="InterPro" id="IPR022938">
    <property type="entry name" value="SRP19_arc-type"/>
</dbReference>
<dbReference type="PANTHER" id="PTHR17453">
    <property type="entry name" value="SIGNAL RECOGNITION PARTICLE 19 KD PROTEIN"/>
    <property type="match status" value="1"/>
</dbReference>
<dbReference type="PANTHER" id="PTHR17453:SF0">
    <property type="entry name" value="SIGNAL RECOGNITION PARTICLE 19 KDA PROTEIN"/>
    <property type="match status" value="1"/>
</dbReference>
<dbReference type="Pfam" id="PF01922">
    <property type="entry name" value="SRP19"/>
    <property type="match status" value="1"/>
</dbReference>
<dbReference type="SUPFAM" id="SSF69695">
    <property type="entry name" value="SRP19"/>
    <property type="match status" value="1"/>
</dbReference>
<name>SRP19_METM7</name>
<protein>
    <recommendedName>
        <fullName evidence="1">Signal recognition particle 19 kDa protein</fullName>
        <shortName evidence="1">SRP19</shortName>
    </recommendedName>
</protein>